<feature type="chain" id="PRO_1000100255" description="Dihydroorotate dehydrogenase (quinone)">
    <location>
        <begin position="1"/>
        <end position="342"/>
    </location>
</feature>
<feature type="active site" description="Nucleophile" evidence="1">
    <location>
        <position position="174"/>
    </location>
</feature>
<feature type="binding site" evidence="1">
    <location>
        <begin position="61"/>
        <end position="65"/>
    </location>
    <ligand>
        <name>FMN</name>
        <dbReference type="ChEBI" id="CHEBI:58210"/>
    </ligand>
</feature>
<feature type="binding site" evidence="1">
    <location>
        <position position="65"/>
    </location>
    <ligand>
        <name>substrate</name>
    </ligand>
</feature>
<feature type="binding site" evidence="1">
    <location>
        <position position="85"/>
    </location>
    <ligand>
        <name>FMN</name>
        <dbReference type="ChEBI" id="CHEBI:58210"/>
    </ligand>
</feature>
<feature type="binding site" evidence="1">
    <location>
        <begin position="110"/>
        <end position="114"/>
    </location>
    <ligand>
        <name>substrate</name>
    </ligand>
</feature>
<feature type="binding site" evidence="1">
    <location>
        <position position="138"/>
    </location>
    <ligand>
        <name>FMN</name>
        <dbReference type="ChEBI" id="CHEBI:58210"/>
    </ligand>
</feature>
<feature type="binding site" evidence="1">
    <location>
        <position position="171"/>
    </location>
    <ligand>
        <name>FMN</name>
        <dbReference type="ChEBI" id="CHEBI:58210"/>
    </ligand>
</feature>
<feature type="binding site" evidence="1">
    <location>
        <position position="171"/>
    </location>
    <ligand>
        <name>substrate</name>
    </ligand>
</feature>
<feature type="binding site" evidence="1">
    <location>
        <position position="176"/>
    </location>
    <ligand>
        <name>substrate</name>
    </ligand>
</feature>
<feature type="binding site" evidence="1">
    <location>
        <position position="216"/>
    </location>
    <ligand>
        <name>FMN</name>
        <dbReference type="ChEBI" id="CHEBI:58210"/>
    </ligand>
</feature>
<feature type="binding site" evidence="1">
    <location>
        <position position="244"/>
    </location>
    <ligand>
        <name>FMN</name>
        <dbReference type="ChEBI" id="CHEBI:58210"/>
    </ligand>
</feature>
<feature type="binding site" evidence="1">
    <location>
        <begin position="245"/>
        <end position="246"/>
    </location>
    <ligand>
        <name>substrate</name>
    </ligand>
</feature>
<feature type="binding site" evidence="1">
    <location>
        <position position="267"/>
    </location>
    <ligand>
        <name>FMN</name>
        <dbReference type="ChEBI" id="CHEBI:58210"/>
    </ligand>
</feature>
<feature type="binding site" evidence="1">
    <location>
        <position position="296"/>
    </location>
    <ligand>
        <name>FMN</name>
        <dbReference type="ChEBI" id="CHEBI:58210"/>
    </ligand>
</feature>
<feature type="binding site" evidence="1">
    <location>
        <begin position="317"/>
        <end position="318"/>
    </location>
    <ligand>
        <name>FMN</name>
        <dbReference type="ChEBI" id="CHEBI:58210"/>
    </ligand>
</feature>
<keyword id="KW-1003">Cell membrane</keyword>
<keyword id="KW-0285">Flavoprotein</keyword>
<keyword id="KW-0288">FMN</keyword>
<keyword id="KW-0472">Membrane</keyword>
<keyword id="KW-0560">Oxidoreductase</keyword>
<keyword id="KW-0665">Pyrimidine biosynthesis</keyword>
<keyword id="KW-1185">Reference proteome</keyword>
<dbReference type="EC" id="1.3.5.2" evidence="1"/>
<dbReference type="EMBL" id="CP000934">
    <property type="protein sequence ID" value="ACE85522.1"/>
    <property type="molecule type" value="Genomic_DNA"/>
</dbReference>
<dbReference type="RefSeq" id="WP_012487760.1">
    <property type="nucleotide sequence ID" value="NC_010995.1"/>
</dbReference>
<dbReference type="SMR" id="B3PIL8"/>
<dbReference type="STRING" id="498211.CJA_2158"/>
<dbReference type="KEGG" id="cja:CJA_2158"/>
<dbReference type="eggNOG" id="COG0167">
    <property type="taxonomic scope" value="Bacteria"/>
</dbReference>
<dbReference type="HOGENOM" id="CLU_013640_2_0_6"/>
<dbReference type="OrthoDB" id="9802377at2"/>
<dbReference type="UniPathway" id="UPA00070">
    <property type="reaction ID" value="UER00946"/>
</dbReference>
<dbReference type="Proteomes" id="UP000001036">
    <property type="component" value="Chromosome"/>
</dbReference>
<dbReference type="GO" id="GO:0005737">
    <property type="term" value="C:cytoplasm"/>
    <property type="evidence" value="ECO:0007669"/>
    <property type="project" value="InterPro"/>
</dbReference>
<dbReference type="GO" id="GO:0005886">
    <property type="term" value="C:plasma membrane"/>
    <property type="evidence" value="ECO:0007669"/>
    <property type="project" value="UniProtKB-SubCell"/>
</dbReference>
<dbReference type="GO" id="GO:0106430">
    <property type="term" value="F:dihydroorotate dehydrogenase (quinone) activity"/>
    <property type="evidence" value="ECO:0007669"/>
    <property type="project" value="UniProtKB-EC"/>
</dbReference>
<dbReference type="GO" id="GO:0006207">
    <property type="term" value="P:'de novo' pyrimidine nucleobase biosynthetic process"/>
    <property type="evidence" value="ECO:0007669"/>
    <property type="project" value="InterPro"/>
</dbReference>
<dbReference type="GO" id="GO:0044205">
    <property type="term" value="P:'de novo' UMP biosynthetic process"/>
    <property type="evidence" value="ECO:0007669"/>
    <property type="project" value="UniProtKB-UniRule"/>
</dbReference>
<dbReference type="CDD" id="cd04738">
    <property type="entry name" value="DHOD_2_like"/>
    <property type="match status" value="1"/>
</dbReference>
<dbReference type="FunFam" id="3.20.20.70:FF:000028">
    <property type="entry name" value="Dihydroorotate dehydrogenase (quinone)"/>
    <property type="match status" value="1"/>
</dbReference>
<dbReference type="Gene3D" id="3.20.20.70">
    <property type="entry name" value="Aldolase class I"/>
    <property type="match status" value="1"/>
</dbReference>
<dbReference type="HAMAP" id="MF_00225">
    <property type="entry name" value="DHO_dh_type2"/>
    <property type="match status" value="1"/>
</dbReference>
<dbReference type="InterPro" id="IPR013785">
    <property type="entry name" value="Aldolase_TIM"/>
</dbReference>
<dbReference type="InterPro" id="IPR050074">
    <property type="entry name" value="DHO_dehydrogenase"/>
</dbReference>
<dbReference type="InterPro" id="IPR012135">
    <property type="entry name" value="Dihydroorotate_DH_1_2"/>
</dbReference>
<dbReference type="InterPro" id="IPR005719">
    <property type="entry name" value="Dihydroorotate_DH_2"/>
</dbReference>
<dbReference type="InterPro" id="IPR005720">
    <property type="entry name" value="Dihydroorotate_DH_cat"/>
</dbReference>
<dbReference type="InterPro" id="IPR001295">
    <property type="entry name" value="Dihydroorotate_DH_CS"/>
</dbReference>
<dbReference type="NCBIfam" id="NF003644">
    <property type="entry name" value="PRK05286.1-1"/>
    <property type="match status" value="1"/>
</dbReference>
<dbReference type="NCBIfam" id="NF003645">
    <property type="entry name" value="PRK05286.1-2"/>
    <property type="match status" value="1"/>
</dbReference>
<dbReference type="NCBIfam" id="NF003646">
    <property type="entry name" value="PRK05286.1-4"/>
    <property type="match status" value="1"/>
</dbReference>
<dbReference type="NCBIfam" id="NF003652">
    <property type="entry name" value="PRK05286.2-5"/>
    <property type="match status" value="1"/>
</dbReference>
<dbReference type="NCBIfam" id="TIGR01036">
    <property type="entry name" value="pyrD_sub2"/>
    <property type="match status" value="1"/>
</dbReference>
<dbReference type="PANTHER" id="PTHR48109:SF4">
    <property type="entry name" value="DIHYDROOROTATE DEHYDROGENASE (QUINONE), MITOCHONDRIAL"/>
    <property type="match status" value="1"/>
</dbReference>
<dbReference type="PANTHER" id="PTHR48109">
    <property type="entry name" value="DIHYDROOROTATE DEHYDROGENASE (QUINONE), MITOCHONDRIAL-RELATED"/>
    <property type="match status" value="1"/>
</dbReference>
<dbReference type="Pfam" id="PF01180">
    <property type="entry name" value="DHO_dh"/>
    <property type="match status" value="1"/>
</dbReference>
<dbReference type="PIRSF" id="PIRSF000164">
    <property type="entry name" value="DHO_oxidase"/>
    <property type="match status" value="1"/>
</dbReference>
<dbReference type="SUPFAM" id="SSF51395">
    <property type="entry name" value="FMN-linked oxidoreductases"/>
    <property type="match status" value="1"/>
</dbReference>
<dbReference type="PROSITE" id="PS00911">
    <property type="entry name" value="DHODEHASE_1"/>
    <property type="match status" value="1"/>
</dbReference>
<dbReference type="PROSITE" id="PS00912">
    <property type="entry name" value="DHODEHASE_2"/>
    <property type="match status" value="1"/>
</dbReference>
<sequence length="342" mass="36198">MYSHVRDLLFRLNPETSHEFSLDMLGAAERLKLIGLMAAKVPETPVEVMGLRFPNPVGLAAGLDKNGDYFNALGALGFGFVEIGTITPRPQPGNAQPRLFRIPEAKAIINRMGFNNKGVDHLVAQVKKRRYQGILGINIGKNATTPVENAVDDYLTCLRKVYDHADYITVNISSPNTPGLRSLQFGDSLSQLLAPLKKEQGVLQQAGGRYVPIAVKIAPDMDDSEIAQVAGVLLQEGMDGVIATNTTIGREGVEGYDTGKEAGGLSGLPVRDKSTAVIQSLNQCLGGKLPIIGVGGIFDGASAADKVRAGASLVQVYSGFIYEGPALIAAAAAGIASYHQGQ</sequence>
<proteinExistence type="inferred from homology"/>
<name>PYRD_CELJU</name>
<organism>
    <name type="scientific">Cellvibrio japonicus (strain Ueda107)</name>
    <name type="common">Pseudomonas fluorescens subsp. cellulosa</name>
    <dbReference type="NCBI Taxonomy" id="498211"/>
    <lineage>
        <taxon>Bacteria</taxon>
        <taxon>Pseudomonadati</taxon>
        <taxon>Pseudomonadota</taxon>
        <taxon>Gammaproteobacteria</taxon>
        <taxon>Cellvibrionales</taxon>
        <taxon>Cellvibrionaceae</taxon>
        <taxon>Cellvibrio</taxon>
    </lineage>
</organism>
<accession>B3PIL8</accession>
<comment type="function">
    <text evidence="1">Catalyzes the conversion of dihydroorotate to orotate with quinone as electron acceptor.</text>
</comment>
<comment type="catalytic activity">
    <reaction evidence="1">
        <text>(S)-dihydroorotate + a quinone = orotate + a quinol</text>
        <dbReference type="Rhea" id="RHEA:30187"/>
        <dbReference type="ChEBI" id="CHEBI:24646"/>
        <dbReference type="ChEBI" id="CHEBI:30839"/>
        <dbReference type="ChEBI" id="CHEBI:30864"/>
        <dbReference type="ChEBI" id="CHEBI:132124"/>
        <dbReference type="EC" id="1.3.5.2"/>
    </reaction>
</comment>
<comment type="cofactor">
    <cofactor evidence="1">
        <name>FMN</name>
        <dbReference type="ChEBI" id="CHEBI:58210"/>
    </cofactor>
    <text evidence="1">Binds 1 FMN per subunit.</text>
</comment>
<comment type="pathway">
    <text evidence="1">Pyrimidine metabolism; UMP biosynthesis via de novo pathway; orotate from (S)-dihydroorotate (quinone route): step 1/1.</text>
</comment>
<comment type="subunit">
    <text evidence="1">Monomer.</text>
</comment>
<comment type="subcellular location">
    <subcellularLocation>
        <location evidence="1">Cell membrane</location>
        <topology evidence="1">Peripheral membrane protein</topology>
    </subcellularLocation>
</comment>
<comment type="similarity">
    <text evidence="1">Belongs to the dihydroorotate dehydrogenase family. Type 2 subfamily.</text>
</comment>
<gene>
    <name evidence="1" type="primary">pyrD</name>
    <name type="ordered locus">CJA_2158</name>
</gene>
<protein>
    <recommendedName>
        <fullName evidence="1">Dihydroorotate dehydrogenase (quinone)</fullName>
        <ecNumber evidence="1">1.3.5.2</ecNumber>
    </recommendedName>
    <alternativeName>
        <fullName evidence="1">DHOdehase</fullName>
        <shortName evidence="1">DHOD</shortName>
        <shortName evidence="1">DHODase</shortName>
    </alternativeName>
    <alternativeName>
        <fullName evidence="1">Dihydroorotate oxidase</fullName>
    </alternativeName>
</protein>
<reference key="1">
    <citation type="journal article" date="2008" name="J. Bacteriol.">
        <title>Insights into plant cell wall degradation from the genome sequence of the soil bacterium Cellvibrio japonicus.</title>
        <authorList>
            <person name="DeBoy R.T."/>
            <person name="Mongodin E.F."/>
            <person name="Fouts D.E."/>
            <person name="Tailford L.E."/>
            <person name="Khouri H."/>
            <person name="Emerson J.B."/>
            <person name="Mohamoud Y."/>
            <person name="Watkins K."/>
            <person name="Henrissat B."/>
            <person name="Gilbert H.J."/>
            <person name="Nelson K.E."/>
        </authorList>
    </citation>
    <scope>NUCLEOTIDE SEQUENCE [LARGE SCALE GENOMIC DNA]</scope>
    <source>
        <strain>Ueda107</strain>
    </source>
</reference>
<evidence type="ECO:0000255" key="1">
    <source>
        <dbReference type="HAMAP-Rule" id="MF_00225"/>
    </source>
</evidence>